<sequence>MEIFDYDNILLLPRKCRVESRSECDASVELGRQRFRIPVVPANMKTVVDESICVWLAQNSYFYVMHRFDLDNVQFVKNMKARGLYASISLGVKKPDYDTVDQLLALGLVPDYITIDIAHGHADSVKNMIGYLKEKMPTVFIIAGNVATPEAVIDLENWGADATKVGIGPGKVCITKLKTGFGTGGWQLSAVKWCARVATKPIIADGGIHEHGDIAKSIRFGATMVMIGSMLAGHEESPGKSVEVDGKLYKEYYGSASDFNKGEYKHVEGKRILEPVKGKLADTLIEMEQDVQSSISYSGGKRLMDIRKVNYVTLGGDNAGEHLLM</sequence>
<dbReference type="EC" id="1.7.1.7" evidence="1"/>
<dbReference type="EMBL" id="CP000267">
    <property type="protein sequence ID" value="ABD70748.1"/>
    <property type="molecule type" value="Genomic_DNA"/>
</dbReference>
<dbReference type="RefSeq" id="WP_011465314.1">
    <property type="nucleotide sequence ID" value="NC_007908.1"/>
</dbReference>
<dbReference type="SMR" id="Q21U05"/>
<dbReference type="STRING" id="338969.Rfer_3037"/>
<dbReference type="KEGG" id="rfr:Rfer_3037"/>
<dbReference type="eggNOG" id="COG0516">
    <property type="taxonomic scope" value="Bacteria"/>
</dbReference>
<dbReference type="HOGENOM" id="CLU_022552_5_0_4"/>
<dbReference type="OrthoDB" id="9805398at2"/>
<dbReference type="Proteomes" id="UP000008332">
    <property type="component" value="Chromosome"/>
</dbReference>
<dbReference type="GO" id="GO:0005829">
    <property type="term" value="C:cytosol"/>
    <property type="evidence" value="ECO:0007669"/>
    <property type="project" value="TreeGrafter"/>
</dbReference>
<dbReference type="GO" id="GO:1902560">
    <property type="term" value="C:GMP reductase complex"/>
    <property type="evidence" value="ECO:0007669"/>
    <property type="project" value="InterPro"/>
</dbReference>
<dbReference type="GO" id="GO:0003920">
    <property type="term" value="F:GMP reductase activity"/>
    <property type="evidence" value="ECO:0007669"/>
    <property type="project" value="UniProtKB-UniRule"/>
</dbReference>
<dbReference type="GO" id="GO:0006163">
    <property type="term" value="P:purine nucleotide metabolic process"/>
    <property type="evidence" value="ECO:0007669"/>
    <property type="project" value="UniProtKB-UniRule"/>
</dbReference>
<dbReference type="CDD" id="cd00381">
    <property type="entry name" value="IMPDH"/>
    <property type="match status" value="1"/>
</dbReference>
<dbReference type="FunFam" id="3.20.20.70:FF:000424">
    <property type="entry name" value="Inosine-5'-monophosphate dehydrogenase 2"/>
    <property type="match status" value="1"/>
</dbReference>
<dbReference type="Gene3D" id="3.20.20.70">
    <property type="entry name" value="Aldolase class I"/>
    <property type="match status" value="1"/>
</dbReference>
<dbReference type="HAMAP" id="MF_01511">
    <property type="entry name" value="GMP_reduct_type2"/>
    <property type="match status" value="1"/>
</dbReference>
<dbReference type="InterPro" id="IPR013785">
    <property type="entry name" value="Aldolase_TIM"/>
</dbReference>
<dbReference type="InterPro" id="IPR050139">
    <property type="entry name" value="GMP_reductase"/>
</dbReference>
<dbReference type="InterPro" id="IPR005994">
    <property type="entry name" value="GuaC_type_2"/>
</dbReference>
<dbReference type="InterPro" id="IPR015875">
    <property type="entry name" value="IMP_DH/GMP_Rdtase_CS"/>
</dbReference>
<dbReference type="InterPro" id="IPR001093">
    <property type="entry name" value="IMP_DH_GMPRt"/>
</dbReference>
<dbReference type="NCBIfam" id="TIGR01306">
    <property type="entry name" value="GMP_reduct_2"/>
    <property type="match status" value="1"/>
</dbReference>
<dbReference type="NCBIfam" id="NF003966">
    <property type="entry name" value="PRK05458.1"/>
    <property type="match status" value="1"/>
</dbReference>
<dbReference type="PANTHER" id="PTHR43170">
    <property type="entry name" value="GMP REDUCTASE"/>
    <property type="match status" value="1"/>
</dbReference>
<dbReference type="PANTHER" id="PTHR43170:SF5">
    <property type="entry name" value="GMP REDUCTASE"/>
    <property type="match status" value="1"/>
</dbReference>
<dbReference type="Pfam" id="PF00478">
    <property type="entry name" value="IMPDH"/>
    <property type="match status" value="1"/>
</dbReference>
<dbReference type="PIRSF" id="PIRSF036500">
    <property type="entry name" value="GMP_red_Firmic"/>
    <property type="match status" value="1"/>
</dbReference>
<dbReference type="SMART" id="SM01240">
    <property type="entry name" value="IMPDH"/>
    <property type="match status" value="1"/>
</dbReference>
<dbReference type="SUPFAM" id="SSF51412">
    <property type="entry name" value="Inosine monophosphate dehydrogenase (IMPDH)"/>
    <property type="match status" value="1"/>
</dbReference>
<dbReference type="PROSITE" id="PS00487">
    <property type="entry name" value="IMP_DH_GMP_RED"/>
    <property type="match status" value="1"/>
</dbReference>
<gene>
    <name evidence="1" type="primary">guaC</name>
    <name type="ordered locus">Rfer_3037</name>
</gene>
<organism>
    <name type="scientific">Albidiferax ferrireducens (strain ATCC BAA-621 / DSM 15236 / T118)</name>
    <name type="common">Rhodoferax ferrireducens</name>
    <dbReference type="NCBI Taxonomy" id="338969"/>
    <lineage>
        <taxon>Bacteria</taxon>
        <taxon>Pseudomonadati</taxon>
        <taxon>Pseudomonadota</taxon>
        <taxon>Betaproteobacteria</taxon>
        <taxon>Burkholderiales</taxon>
        <taxon>Comamonadaceae</taxon>
        <taxon>Rhodoferax</taxon>
    </lineage>
</organism>
<evidence type="ECO:0000255" key="1">
    <source>
        <dbReference type="HAMAP-Rule" id="MF_01511"/>
    </source>
</evidence>
<keyword id="KW-0521">NADP</keyword>
<keyword id="KW-0560">Oxidoreductase</keyword>
<keyword id="KW-1185">Reference proteome</keyword>
<feature type="chain" id="PRO_0000294283" description="GMP reductase">
    <location>
        <begin position="1"/>
        <end position="325"/>
    </location>
</feature>
<feature type="active site" description="Thioimidate intermediate" evidence="1">
    <location>
        <position position="173"/>
    </location>
</feature>
<feature type="binding site" evidence="1">
    <location>
        <begin position="202"/>
        <end position="225"/>
    </location>
    <ligand>
        <name>NADP(+)</name>
        <dbReference type="ChEBI" id="CHEBI:58349"/>
    </ligand>
</feature>
<protein>
    <recommendedName>
        <fullName evidence="1">GMP reductase</fullName>
        <ecNumber evidence="1">1.7.1.7</ecNumber>
    </recommendedName>
    <alternativeName>
        <fullName evidence="1">Guanosine 5'-monophosphate oxidoreductase</fullName>
        <shortName evidence="1">Guanosine monophosphate reductase</shortName>
    </alternativeName>
</protein>
<accession>Q21U05</accession>
<comment type="function">
    <text evidence="1">Catalyzes the irreversible NADPH-dependent deamination of GMP to IMP. It functions in the conversion of nucleobase, nucleoside and nucleotide derivatives of G to A nucleotides, and in maintaining the intracellular balance of A and G nucleotides.</text>
</comment>
<comment type="catalytic activity">
    <reaction evidence="1">
        <text>IMP + NH4(+) + NADP(+) = GMP + NADPH + 2 H(+)</text>
        <dbReference type="Rhea" id="RHEA:17185"/>
        <dbReference type="ChEBI" id="CHEBI:15378"/>
        <dbReference type="ChEBI" id="CHEBI:28938"/>
        <dbReference type="ChEBI" id="CHEBI:57783"/>
        <dbReference type="ChEBI" id="CHEBI:58053"/>
        <dbReference type="ChEBI" id="CHEBI:58115"/>
        <dbReference type="ChEBI" id="CHEBI:58349"/>
        <dbReference type="EC" id="1.7.1.7"/>
    </reaction>
</comment>
<comment type="similarity">
    <text evidence="1">Belongs to the IMPDH/GMPR family. GuaC type 2 subfamily.</text>
</comment>
<name>GUAC_ALBFT</name>
<proteinExistence type="inferred from homology"/>
<reference key="1">
    <citation type="submission" date="2006-02" db="EMBL/GenBank/DDBJ databases">
        <title>Complete sequence of chromosome of Rhodoferax ferrireducens DSM 15236.</title>
        <authorList>
            <person name="Copeland A."/>
            <person name="Lucas S."/>
            <person name="Lapidus A."/>
            <person name="Barry K."/>
            <person name="Detter J.C."/>
            <person name="Glavina del Rio T."/>
            <person name="Hammon N."/>
            <person name="Israni S."/>
            <person name="Pitluck S."/>
            <person name="Brettin T."/>
            <person name="Bruce D."/>
            <person name="Han C."/>
            <person name="Tapia R."/>
            <person name="Gilna P."/>
            <person name="Kiss H."/>
            <person name="Schmutz J."/>
            <person name="Larimer F."/>
            <person name="Land M."/>
            <person name="Kyrpides N."/>
            <person name="Ivanova N."/>
            <person name="Richardson P."/>
        </authorList>
    </citation>
    <scope>NUCLEOTIDE SEQUENCE [LARGE SCALE GENOMIC DNA]</scope>
    <source>
        <strain>ATCC BAA-621 / DSM 15236 / T118</strain>
    </source>
</reference>